<reference key="1">
    <citation type="journal article" date="2007" name="Nature">
        <title>Evolution of genes and genomes on the Drosophila phylogeny.</title>
        <authorList>
            <consortium name="Drosophila 12 genomes consortium"/>
        </authorList>
    </citation>
    <scope>NUCLEOTIDE SEQUENCE [LARGE SCALE GENOMIC DNA]</scope>
</reference>
<comment type="function">
    <text evidence="1">Component of the eukaryotic translation initiation factor 3 (eIF-3) complex, which is involved in protein synthesis of a specialized repertoire of mRNAs and, together with other initiation factors, stimulates binding of mRNA and methionyl-tRNAi to the 40S ribosome. The eIF-3 complex specifically targets and initiates translation of a subset of mRNAs involved in cell proliferation.</text>
</comment>
<comment type="subunit">
    <text evidence="1">Component of the eukaryotic translation initiation factor 3 (eIF-3) complex. The eIF-3 complex interacts with pix.</text>
</comment>
<comment type="subcellular location">
    <subcellularLocation>
        <location evidence="1">Cytoplasm</location>
    </subcellularLocation>
</comment>
<comment type="similarity">
    <text evidence="1">Belongs to the eIF-3 subunit F family.</text>
</comment>
<organism>
    <name type="scientific">Drosophila simulans</name>
    <name type="common">Fruit fly</name>
    <dbReference type="NCBI Taxonomy" id="7240"/>
    <lineage>
        <taxon>Eukaryota</taxon>
        <taxon>Metazoa</taxon>
        <taxon>Ecdysozoa</taxon>
        <taxon>Arthropoda</taxon>
        <taxon>Hexapoda</taxon>
        <taxon>Insecta</taxon>
        <taxon>Pterygota</taxon>
        <taxon>Neoptera</taxon>
        <taxon>Endopterygota</taxon>
        <taxon>Diptera</taxon>
        <taxon>Brachycera</taxon>
        <taxon>Muscomorpha</taxon>
        <taxon>Ephydroidea</taxon>
        <taxon>Drosophilidae</taxon>
        <taxon>Drosophila</taxon>
        <taxon>Sophophora</taxon>
    </lineage>
</organism>
<keyword id="KW-0963">Cytoplasm</keyword>
<keyword id="KW-0396">Initiation factor</keyword>
<keyword id="KW-0648">Protein biosynthesis</keyword>
<keyword id="KW-1185">Reference proteome</keyword>
<name>EI3F1_DROSI</name>
<accession>B4QVL3</accession>
<feature type="chain" id="PRO_0000364313" description="Eukaryotic translation initiation factor 3 subunit F-1">
    <location>
        <begin position="1"/>
        <end position="280"/>
    </location>
</feature>
<feature type="domain" description="MPN" evidence="2">
    <location>
        <begin position="8"/>
        <end position="138"/>
    </location>
</feature>
<proteinExistence type="inferred from homology"/>
<evidence type="ECO:0000255" key="1">
    <source>
        <dbReference type="HAMAP-Rule" id="MF_03005"/>
    </source>
</evidence>
<evidence type="ECO:0000255" key="2">
    <source>
        <dbReference type="PROSITE-ProRule" id="PRU01182"/>
    </source>
</evidence>
<dbReference type="EMBL" id="CM000364">
    <property type="protein sequence ID" value="EDX11638.1"/>
    <property type="molecule type" value="Genomic_DNA"/>
</dbReference>
<dbReference type="SMR" id="B4QVL3"/>
<dbReference type="STRING" id="7240.B4QVL3"/>
<dbReference type="EnsemblMetazoa" id="FBtr0219573">
    <property type="protein sequence ID" value="FBpp0218065"/>
    <property type="gene ID" value="FBgn0191154"/>
</dbReference>
<dbReference type="EnsemblMetazoa" id="XM_002102099.4">
    <property type="protein sequence ID" value="XP_002102135.1"/>
    <property type="gene ID" value="LOC6726724"/>
</dbReference>
<dbReference type="GeneID" id="6726724"/>
<dbReference type="KEGG" id="dsi:Dsimw501_GD19663"/>
<dbReference type="CTD" id="40587"/>
<dbReference type="HOGENOM" id="CLU_027018_0_1_1"/>
<dbReference type="OMA" id="EYFVHFH"/>
<dbReference type="OrthoDB" id="25498at2759"/>
<dbReference type="PhylomeDB" id="B4QVL3"/>
<dbReference type="Proteomes" id="UP000000304">
    <property type="component" value="Chromosome 3R"/>
</dbReference>
<dbReference type="Bgee" id="FBgn0191154">
    <property type="expression patterns" value="Expressed in embryo and 3 other cell types or tissues"/>
</dbReference>
<dbReference type="GO" id="GO:0016282">
    <property type="term" value="C:eukaryotic 43S preinitiation complex"/>
    <property type="evidence" value="ECO:0007669"/>
    <property type="project" value="UniProtKB-UniRule"/>
</dbReference>
<dbReference type="GO" id="GO:0033290">
    <property type="term" value="C:eukaryotic 48S preinitiation complex"/>
    <property type="evidence" value="ECO:0007669"/>
    <property type="project" value="UniProtKB-UniRule"/>
</dbReference>
<dbReference type="GO" id="GO:0071541">
    <property type="term" value="C:eukaryotic translation initiation factor 3 complex, eIF3m"/>
    <property type="evidence" value="ECO:0007669"/>
    <property type="project" value="TreeGrafter"/>
</dbReference>
<dbReference type="GO" id="GO:0140492">
    <property type="term" value="F:metal-dependent deubiquitinase activity"/>
    <property type="evidence" value="ECO:0007669"/>
    <property type="project" value="EnsemblMetazoa"/>
</dbReference>
<dbReference type="GO" id="GO:0003743">
    <property type="term" value="F:translation initiation factor activity"/>
    <property type="evidence" value="ECO:0007669"/>
    <property type="project" value="UniProtKB-UniRule"/>
</dbReference>
<dbReference type="GO" id="GO:0031369">
    <property type="term" value="F:translation initiation factor binding"/>
    <property type="evidence" value="ECO:0007669"/>
    <property type="project" value="InterPro"/>
</dbReference>
<dbReference type="GO" id="GO:0140367">
    <property type="term" value="P:antibacterial innate immune response"/>
    <property type="evidence" value="ECO:0007669"/>
    <property type="project" value="EnsemblMetazoa"/>
</dbReference>
<dbReference type="GO" id="GO:0050829">
    <property type="term" value="P:defense response to Gram-negative bacterium"/>
    <property type="evidence" value="ECO:0007669"/>
    <property type="project" value="EnsemblMetazoa"/>
</dbReference>
<dbReference type="GO" id="GO:0001732">
    <property type="term" value="P:formation of cytoplasmic translation initiation complex"/>
    <property type="evidence" value="ECO:0007669"/>
    <property type="project" value="UniProtKB-UniRule"/>
</dbReference>
<dbReference type="GO" id="GO:0045747">
    <property type="term" value="P:positive regulation of Notch signaling pathway"/>
    <property type="evidence" value="ECO:0007669"/>
    <property type="project" value="EnsemblMetazoa"/>
</dbReference>
<dbReference type="GO" id="GO:0061059">
    <property type="term" value="P:positive regulation of peptidoglycan recognition protein signaling pathway"/>
    <property type="evidence" value="ECO:0007669"/>
    <property type="project" value="EnsemblMetazoa"/>
</dbReference>
<dbReference type="CDD" id="cd08064">
    <property type="entry name" value="MPN_eIF3f"/>
    <property type="match status" value="1"/>
</dbReference>
<dbReference type="FunFam" id="3.40.140.10:FF:000014">
    <property type="entry name" value="Eukaryotic translation initiation factor 3 subunit F"/>
    <property type="match status" value="1"/>
</dbReference>
<dbReference type="Gene3D" id="3.40.140.10">
    <property type="entry name" value="Cytidine Deaminase, domain 2"/>
    <property type="match status" value="1"/>
</dbReference>
<dbReference type="HAMAP" id="MF_03005">
    <property type="entry name" value="eIF3f"/>
    <property type="match status" value="1"/>
</dbReference>
<dbReference type="InterPro" id="IPR027531">
    <property type="entry name" value="eIF3f"/>
</dbReference>
<dbReference type="InterPro" id="IPR024969">
    <property type="entry name" value="EIF3F/CSN6-like_C"/>
</dbReference>
<dbReference type="InterPro" id="IPR000555">
    <property type="entry name" value="JAMM/MPN+_dom"/>
</dbReference>
<dbReference type="InterPro" id="IPR037518">
    <property type="entry name" value="MPN"/>
</dbReference>
<dbReference type="PANTHER" id="PTHR10540:SF6">
    <property type="entry name" value="EUKARYOTIC TRANSLATION INITIATION FACTOR 3 SUBUNIT F"/>
    <property type="match status" value="1"/>
</dbReference>
<dbReference type="PANTHER" id="PTHR10540">
    <property type="entry name" value="EUKARYOTIC TRANSLATION INITIATION FACTOR 3 SUBUNIT F-RELATED"/>
    <property type="match status" value="1"/>
</dbReference>
<dbReference type="Pfam" id="PF01398">
    <property type="entry name" value="JAB"/>
    <property type="match status" value="1"/>
</dbReference>
<dbReference type="Pfam" id="PF13012">
    <property type="entry name" value="MitMem_reg"/>
    <property type="match status" value="1"/>
</dbReference>
<dbReference type="SMART" id="SM00232">
    <property type="entry name" value="JAB_MPN"/>
    <property type="match status" value="1"/>
</dbReference>
<dbReference type="PROSITE" id="PS50249">
    <property type="entry name" value="MPN"/>
    <property type="match status" value="1"/>
</dbReference>
<sequence length="280" mass="31105">MSALNLTVRVHPVVLFQVVDAFERRNADSHRVIGTLLGSVDKGVVEVTNCFCVPHKEHDDQVEAELSYALDMYDLNRKVNSNESVVGWWATGNDVTNHSSVIHEYYARECNNPVHLTVDTSLQGGRMGLRAYVCIQLGVPGGKSGCMFTPIPVELTSYEPETFGLKLLQKTVGVSPAHRPKTVPPMLDLAQISEASTKLQSLLDLILKYVDDVIAHKVTPDNAVGRQLLDLIHSVPHMTHEQFTQMFNANVRNLLLVITLSQLIKTQLQLNEKLTFLPTA</sequence>
<gene>
    <name evidence="1" type="primary">eIF3f1</name>
    <name evidence="1" type="synonym">eIF3-S5-1</name>
    <name type="ORF">GD19663</name>
</gene>
<protein>
    <recommendedName>
        <fullName evidence="1">Eukaryotic translation initiation factor 3 subunit F-1</fullName>
        <shortName evidence="1">eIF3f-1</shortName>
    </recommendedName>
    <alternativeName>
        <fullName evidence="1">Eukaryotic translation initiation factor 3 subunit 5-1</fullName>
    </alternativeName>
</protein>